<name>LACG_LACLL</name>
<dbReference type="EC" id="3.2.1.85" evidence="1"/>
<dbReference type="EMBL" id="M28357">
    <property type="protein sequence ID" value="AAA25173.1"/>
    <property type="molecule type" value="Genomic_DNA"/>
</dbReference>
<dbReference type="EMBL" id="M60447">
    <property type="protein sequence ID" value="AAA25183.1"/>
    <property type="molecule type" value="Genomic_DNA"/>
</dbReference>
<dbReference type="EMBL" id="M19454">
    <property type="protein sequence ID" value="AAA26949.1"/>
    <property type="status" value="ALT_INIT"/>
    <property type="molecule type" value="Genomic_DNA"/>
</dbReference>
<dbReference type="EMBL" id="X60456">
    <property type="protein sequence ID" value="CAA42986.1"/>
    <property type="status" value="ALT_INIT"/>
    <property type="molecule type" value="Genomic_DNA"/>
</dbReference>
<dbReference type="PIR" id="A37168">
    <property type="entry name" value="GLSOPL"/>
</dbReference>
<dbReference type="PDB" id="1PBG">
    <property type="method" value="X-ray"/>
    <property type="resolution" value="2.30 A"/>
    <property type="chains" value="A/B=1-468"/>
</dbReference>
<dbReference type="PDB" id="2PBG">
    <property type="method" value="X-ray"/>
    <property type="resolution" value="2.50 A"/>
    <property type="chains" value="A=1-468"/>
</dbReference>
<dbReference type="PDB" id="3PBG">
    <property type="method" value="X-ray"/>
    <property type="resolution" value="2.70 A"/>
    <property type="chains" value="A/B=1-468"/>
</dbReference>
<dbReference type="PDB" id="4PBG">
    <property type="method" value="X-ray"/>
    <property type="resolution" value="2.50 A"/>
    <property type="chains" value="A/B=1-468"/>
</dbReference>
<dbReference type="PDBsum" id="1PBG"/>
<dbReference type="PDBsum" id="2PBG"/>
<dbReference type="PDBsum" id="3PBG"/>
<dbReference type="PDBsum" id="4PBG"/>
<dbReference type="SMR" id="P11546"/>
<dbReference type="DrugBank" id="DB02312">
    <property type="generic name" value="beta-D-galactose 6-phosphate"/>
</dbReference>
<dbReference type="CAZy" id="GH1">
    <property type="family name" value="Glycoside Hydrolase Family 1"/>
</dbReference>
<dbReference type="BRENDA" id="3.2.1.85">
    <property type="organism ID" value="2903"/>
</dbReference>
<dbReference type="SABIO-RK" id="P11546"/>
<dbReference type="UniPathway" id="UPA00542">
    <property type="reaction ID" value="UER00605"/>
</dbReference>
<dbReference type="EvolutionaryTrace" id="P11546"/>
<dbReference type="GO" id="GO:0005829">
    <property type="term" value="C:cytosol"/>
    <property type="evidence" value="ECO:0007669"/>
    <property type="project" value="TreeGrafter"/>
</dbReference>
<dbReference type="GO" id="GO:0033920">
    <property type="term" value="F:6-phospho-beta-galactosidase activity"/>
    <property type="evidence" value="ECO:0007669"/>
    <property type="project" value="UniProtKB-UniRule"/>
</dbReference>
<dbReference type="GO" id="GO:0008422">
    <property type="term" value="F:beta-glucosidase activity"/>
    <property type="evidence" value="ECO:0007669"/>
    <property type="project" value="TreeGrafter"/>
</dbReference>
<dbReference type="GO" id="GO:0019512">
    <property type="term" value="P:lactose catabolic process via tagatose-6-phosphate"/>
    <property type="evidence" value="ECO:0007669"/>
    <property type="project" value="InterPro"/>
</dbReference>
<dbReference type="FunFam" id="3.20.20.80:FF:000004">
    <property type="entry name" value="Beta-glucosidase 6-phospho-beta-glucosidase"/>
    <property type="match status" value="1"/>
</dbReference>
<dbReference type="Gene3D" id="3.20.20.80">
    <property type="entry name" value="Glycosidases"/>
    <property type="match status" value="1"/>
</dbReference>
<dbReference type="HAMAP" id="MF_01574">
    <property type="entry name" value="LacG"/>
    <property type="match status" value="1"/>
</dbReference>
<dbReference type="InterPro" id="IPR005928">
    <property type="entry name" value="6P-beta-galactosidase"/>
</dbReference>
<dbReference type="InterPro" id="IPR001360">
    <property type="entry name" value="Glyco_hydro_1"/>
</dbReference>
<dbReference type="InterPro" id="IPR018120">
    <property type="entry name" value="Glyco_hydro_1_AS"/>
</dbReference>
<dbReference type="InterPro" id="IPR033132">
    <property type="entry name" value="Glyco_hydro_1_N_CS"/>
</dbReference>
<dbReference type="InterPro" id="IPR017853">
    <property type="entry name" value="Glycoside_hydrolase_SF"/>
</dbReference>
<dbReference type="NCBIfam" id="TIGR01233">
    <property type="entry name" value="lacG"/>
    <property type="match status" value="1"/>
</dbReference>
<dbReference type="NCBIfam" id="NF010036">
    <property type="entry name" value="PRK13511.1"/>
    <property type="match status" value="1"/>
</dbReference>
<dbReference type="PANTHER" id="PTHR10353">
    <property type="entry name" value="GLYCOSYL HYDROLASE"/>
    <property type="match status" value="1"/>
</dbReference>
<dbReference type="PANTHER" id="PTHR10353:SF36">
    <property type="entry name" value="LP05116P"/>
    <property type="match status" value="1"/>
</dbReference>
<dbReference type="Pfam" id="PF00232">
    <property type="entry name" value="Glyco_hydro_1"/>
    <property type="match status" value="1"/>
</dbReference>
<dbReference type="PRINTS" id="PR00131">
    <property type="entry name" value="GLHYDRLASE1"/>
</dbReference>
<dbReference type="SUPFAM" id="SSF51445">
    <property type="entry name" value="(Trans)glycosidases"/>
    <property type="match status" value="1"/>
</dbReference>
<dbReference type="PROSITE" id="PS00572">
    <property type="entry name" value="GLYCOSYL_HYDROL_F1_1"/>
    <property type="match status" value="1"/>
</dbReference>
<dbReference type="PROSITE" id="PS00653">
    <property type="entry name" value="GLYCOSYL_HYDROL_F1_2"/>
    <property type="match status" value="1"/>
</dbReference>
<keyword id="KW-0002">3D-structure</keyword>
<keyword id="KW-0903">Direct protein sequencing</keyword>
<keyword id="KW-0326">Glycosidase</keyword>
<keyword id="KW-0378">Hydrolase</keyword>
<keyword id="KW-0614">Plasmid</keyword>
<reference key="1">
    <citation type="journal article" date="1988" name="Gene">
        <title>Isolation and structural analysis of the phospho-beta-galactosidase gene from Streptococcus lactis Z268.</title>
        <authorList>
            <person name="Boizet B."/>
            <person name="Villeval D."/>
            <person name="Slos P."/>
            <person name="Novel M."/>
            <person name="Novel G."/>
            <person name="Mercenier A."/>
        </authorList>
    </citation>
    <scope>NUCLEOTIDE SEQUENCE [GENOMIC DNA]</scope>
    <source>
        <strain>L13 / Z268</strain>
        <plasmid>pUCL13</plasmid>
    </source>
</reference>
<reference key="2">
    <citation type="journal article" date="1989" name="J. Gen. Microbiol.">
        <title>Structure and expression of the Lactococcus lactis gene for phospho-beta-galactosidase (lacG) in Escherichia coli and L. lactis.</title>
        <authorList>
            <person name="de Vos W.M."/>
            <person name="Gasson M.J."/>
        </authorList>
    </citation>
    <scope>NUCLEOTIDE SEQUENCE [GENOMIC DNA]</scope>
    <scope>PROTEIN SEQUENCE OF 1-10</scope>
    <source>
        <strain>712</strain>
        <plasmid>pLP712</plasmid>
    </source>
</reference>
<reference key="3">
    <citation type="journal article" date="1990" name="J. Biol. Chem.">
        <title>Characterization of the lactose-specific enzymes of the phosphotransferase system in Lactococcus lactis.</title>
        <authorList>
            <person name="de Vos W.M."/>
            <person name="Boerrigter I.J."/>
            <person name="van Rooyen R.J."/>
            <person name="Reiche B."/>
            <person name="Hengstenberg W."/>
        </authorList>
    </citation>
    <scope>NUCLEOTIDE SEQUENCE [GENOMIC DNA]</scope>
    <scope>OPERON STRUCTURE</scope>
    <scope>INDUCTION</scope>
    <source>
        <strain>MG1820</strain>
    </source>
</reference>
<reference key="4">
    <citation type="journal article" date="1992" name="Gene">
        <title>Nonidentity between plasmid and chromosomal copies of ISS1-like sequences in Lactococcus lactis subsp. lactis CNRZ270 and their possible role in chromosomal integration of plasmid genes.</title>
        <authorList>
            <person name="Huang D.C."/>
            <person name="Novel M."/>
            <person name="Huang X.F."/>
            <person name="Novel G."/>
        </authorList>
    </citation>
    <scope>NUCLEOTIDE SEQUENCE [GENOMIC DNA] OF 95-468</scope>
    <source>
        <strain>Z270</strain>
    </source>
</reference>
<reference evidence="9" key="5">
    <citation type="journal article" date="1995" name="Structure">
        <title>The three-dimensional structure of 6-phospho-beta-galactosidase from Lactococcus lactis.</title>
        <authorList>
            <person name="Wiesmann C."/>
            <person name="Beste G."/>
            <person name="Hengstenberg W."/>
            <person name="Schulz G.E."/>
        </authorList>
    </citation>
    <scope>X-RAY CRYSTALLOGRAPHY (2.3 ANGSTROMS)</scope>
    <scope>ACTIVE SITES</scope>
</reference>
<reference evidence="10 11 12" key="6">
    <citation type="journal article" date="1997" name="J. Mol. Biol.">
        <title>Crystal structures and mechanism of 6-phospho-beta-galactosidase from Lactococcus lactis.</title>
        <authorList>
            <person name="Wiesmann C."/>
            <person name="Hengstenberg W."/>
            <person name="Schulz G.E."/>
        </authorList>
    </citation>
    <scope>X-RAY CRYSTALLOGRAPHY (2.50 ANGSTROMS) IN COMPLEX WITH BETA-D-GALACTOSE 6-PHOSPHATE</scope>
</reference>
<proteinExistence type="evidence at protein level"/>
<feature type="chain" id="PRO_0000063883" description="6-phospho-beta-galactosidase">
    <location>
        <begin position="1"/>
        <end position="468"/>
    </location>
</feature>
<feature type="active site" description="Proton donor" evidence="1 8">
    <location>
        <position position="160"/>
    </location>
</feature>
<feature type="active site" description="Nucleophile" evidence="1 8">
    <location>
        <position position="375"/>
    </location>
</feature>
<feature type="binding site" evidence="1 3 12">
    <location>
        <position position="19"/>
    </location>
    <ligand>
        <name>D-galactose 6-phosphate</name>
        <dbReference type="ChEBI" id="CHEBI:91004"/>
    </ligand>
</feature>
<feature type="binding site" evidence="1 3 12">
    <location>
        <position position="116"/>
    </location>
    <ligand>
        <name>D-galactose 6-phosphate</name>
        <dbReference type="ChEBI" id="CHEBI:91004"/>
    </ligand>
</feature>
<feature type="binding site" evidence="1 3 12">
    <location>
        <position position="159"/>
    </location>
    <ligand>
        <name>D-galactose 6-phosphate</name>
        <dbReference type="ChEBI" id="CHEBI:91004"/>
    </ligand>
</feature>
<feature type="binding site" evidence="1 3 12">
    <location>
        <position position="160"/>
    </location>
    <ligand>
        <name>D-galactose 6-phosphate</name>
        <dbReference type="ChEBI" id="CHEBI:91004"/>
    </ligand>
</feature>
<feature type="binding site" evidence="1 3 12">
    <location>
        <position position="297"/>
    </location>
    <ligand>
        <name>D-galactose 6-phosphate</name>
        <dbReference type="ChEBI" id="CHEBI:91004"/>
    </ligand>
</feature>
<feature type="binding site" evidence="1 3 12">
    <location>
        <position position="428"/>
    </location>
    <ligand>
        <name>D-galactose 6-phosphate</name>
        <dbReference type="ChEBI" id="CHEBI:91004"/>
    </ligand>
</feature>
<feature type="binding site" evidence="1 3 12">
    <location>
        <position position="429"/>
    </location>
    <ligand>
        <name>D-galactose 6-phosphate</name>
        <dbReference type="ChEBI" id="CHEBI:91004"/>
    </ligand>
</feature>
<feature type="binding site" evidence="1 3 12">
    <location>
        <position position="435"/>
    </location>
    <ligand>
        <name>D-galactose 6-phosphate</name>
        <dbReference type="ChEBI" id="CHEBI:91004"/>
    </ligand>
</feature>
<feature type="binding site" evidence="1 3 12">
    <location>
        <position position="437"/>
    </location>
    <ligand>
        <name>D-galactose 6-phosphate</name>
        <dbReference type="ChEBI" id="CHEBI:91004"/>
    </ligand>
</feature>
<feature type="sequence conflict" description="In Ref. 1; AAA25173." evidence="7" ref="1">
    <original>E</original>
    <variation>Q</variation>
    <location>
        <position position="383"/>
    </location>
</feature>
<feature type="sequence conflict" description="In Ref. 1; AAA25173." evidence="7" ref="1">
    <original>N</original>
    <variation>K</variation>
    <location>
        <position position="387"/>
    </location>
</feature>
<feature type="strand" evidence="13">
    <location>
        <begin position="10"/>
        <end position="14"/>
    </location>
</feature>
<feature type="helix" evidence="13">
    <location>
        <begin position="17"/>
        <end position="20"/>
    </location>
</feature>
<feature type="helix" evidence="14">
    <location>
        <begin position="26"/>
        <end position="28"/>
    </location>
</feature>
<feature type="helix" evidence="13">
    <location>
        <begin position="34"/>
        <end position="39"/>
    </location>
</feature>
<feature type="strand" evidence="14">
    <location>
        <begin position="41"/>
        <end position="43"/>
    </location>
</feature>
<feature type="strand" evidence="13">
    <location>
        <begin position="46"/>
        <end position="48"/>
    </location>
</feature>
<feature type="helix" evidence="13">
    <location>
        <begin position="52"/>
        <end position="65"/>
    </location>
</feature>
<feature type="strand" evidence="13">
    <location>
        <begin position="70"/>
        <end position="74"/>
    </location>
</feature>
<feature type="helix" evidence="13">
    <location>
        <begin position="77"/>
        <end position="80"/>
    </location>
</feature>
<feature type="strand" evidence="13">
    <location>
        <begin position="84"/>
        <end position="87"/>
    </location>
</feature>
<feature type="helix" evidence="13">
    <location>
        <begin position="90"/>
        <end position="106"/>
    </location>
</feature>
<feature type="strand" evidence="13">
    <location>
        <begin position="109"/>
        <end position="117"/>
    </location>
</feature>
<feature type="helix" evidence="13">
    <location>
        <begin position="121"/>
        <end position="125"/>
    </location>
</feature>
<feature type="helix" evidence="13">
    <location>
        <begin position="128"/>
        <end position="130"/>
    </location>
</feature>
<feature type="helix" evidence="13">
    <location>
        <begin position="133"/>
        <end position="148"/>
    </location>
</feature>
<feature type="strand" evidence="13">
    <location>
        <begin position="154"/>
        <end position="159"/>
    </location>
</feature>
<feature type="helix" evidence="13">
    <location>
        <begin position="161"/>
        <end position="169"/>
    </location>
</feature>
<feature type="strand" evidence="14">
    <location>
        <begin position="174"/>
        <end position="176"/>
    </location>
</feature>
<feature type="helix" evidence="13">
    <location>
        <begin position="182"/>
        <end position="205"/>
    </location>
</feature>
<feature type="strand" evidence="13">
    <location>
        <begin position="209"/>
        <end position="217"/>
    </location>
</feature>
<feature type="strand" evidence="13">
    <location>
        <begin position="221"/>
        <end position="225"/>
    </location>
</feature>
<feature type="helix" evidence="13">
    <location>
        <begin position="229"/>
        <end position="242"/>
    </location>
</feature>
<feature type="helix" evidence="13">
    <location>
        <begin position="244"/>
        <end position="251"/>
    </location>
</feature>
<feature type="helix" evidence="13">
    <location>
        <begin position="257"/>
        <end position="270"/>
    </location>
</feature>
<feature type="helix" evidence="13">
    <location>
        <begin position="278"/>
        <end position="287"/>
    </location>
</feature>
<feature type="turn" evidence="15">
    <location>
        <begin position="288"/>
        <end position="290"/>
    </location>
</feature>
<feature type="strand" evidence="13">
    <location>
        <begin position="293"/>
        <end position="297"/>
    </location>
</feature>
<feature type="strand" evidence="13">
    <location>
        <begin position="302"/>
        <end position="305"/>
    </location>
</feature>
<feature type="strand" evidence="14">
    <location>
        <begin position="312"/>
        <end position="314"/>
    </location>
</feature>
<feature type="strand" evidence="14">
    <location>
        <begin position="325"/>
        <end position="328"/>
    </location>
</feature>
<feature type="turn" evidence="13">
    <location>
        <begin position="329"/>
        <end position="331"/>
    </location>
</feature>
<feature type="strand" evidence="13">
    <location>
        <begin position="332"/>
        <end position="334"/>
    </location>
</feature>
<feature type="strand" evidence="14">
    <location>
        <begin position="338"/>
        <end position="340"/>
    </location>
</feature>
<feature type="helix" evidence="13">
    <location>
        <begin position="352"/>
        <end position="364"/>
    </location>
</feature>
<feature type="helix" evidence="14">
    <location>
        <begin position="366"/>
        <end position="368"/>
    </location>
</feature>
<feature type="strand" evidence="13">
    <location>
        <begin position="371"/>
        <end position="375"/>
    </location>
</feature>
<feature type="helix" evidence="13">
    <location>
        <begin position="392"/>
        <end position="410"/>
    </location>
</feature>
<feature type="strand" evidence="13">
    <location>
        <begin position="415"/>
        <end position="421"/>
    </location>
</feature>
<feature type="turn" evidence="13">
    <location>
        <begin position="429"/>
        <end position="431"/>
    </location>
</feature>
<feature type="helix" evidence="14">
    <location>
        <begin position="432"/>
        <end position="434"/>
    </location>
</feature>
<feature type="strand" evidence="13">
    <location>
        <begin position="439"/>
        <end position="442"/>
    </location>
</feature>
<feature type="turn" evidence="13">
    <location>
        <begin position="444"/>
        <end position="446"/>
    </location>
</feature>
<feature type="strand" evidence="13">
    <location>
        <begin position="449"/>
        <end position="451"/>
    </location>
</feature>
<feature type="helix" evidence="13">
    <location>
        <begin position="453"/>
        <end position="464"/>
    </location>
</feature>
<geneLocation type="plasmid">
    <name>pUCL13</name>
</geneLocation>
<geneLocation type="plasmid">
    <name>pLP712</name>
</geneLocation>
<protein>
    <recommendedName>
        <fullName evidence="1 6">6-phospho-beta-galactosidase</fullName>
        <ecNumber evidence="1">3.2.1.85</ecNumber>
    </recommendedName>
    <alternativeName>
        <fullName evidence="1 5">Beta-D-phosphogalactoside galactohydrolase</fullName>
        <shortName evidence="1">PGALase</shortName>
    </alternativeName>
    <alternativeName>
        <fullName evidence="1 5">P-beta-Gal</fullName>
        <shortName evidence="1">PBG</shortName>
    </alternativeName>
</protein>
<organism>
    <name type="scientific">Lactococcus lactis subsp. lactis</name>
    <name type="common">Streptococcus lactis</name>
    <dbReference type="NCBI Taxonomy" id="1360"/>
    <lineage>
        <taxon>Bacteria</taxon>
        <taxon>Bacillati</taxon>
        <taxon>Bacillota</taxon>
        <taxon>Bacilli</taxon>
        <taxon>Lactobacillales</taxon>
        <taxon>Streptococcaceae</taxon>
        <taxon>Lactococcus</taxon>
    </lineage>
</organism>
<evidence type="ECO:0000255" key="1">
    <source>
        <dbReference type="HAMAP-Rule" id="MF_01574"/>
    </source>
</evidence>
<evidence type="ECO:0000269" key="2">
    <source>
    </source>
</evidence>
<evidence type="ECO:0000269" key="3">
    <source>
    </source>
</evidence>
<evidence type="ECO:0000303" key="4">
    <source>
    </source>
</evidence>
<evidence type="ECO:0000303" key="5">
    <source>
    </source>
</evidence>
<evidence type="ECO:0000303" key="6">
    <source>
    </source>
</evidence>
<evidence type="ECO:0000305" key="7"/>
<evidence type="ECO:0000305" key="8">
    <source>
    </source>
</evidence>
<evidence type="ECO:0007744" key="9">
    <source>
        <dbReference type="PDB" id="1PBG"/>
    </source>
</evidence>
<evidence type="ECO:0007744" key="10">
    <source>
        <dbReference type="PDB" id="2PBG"/>
    </source>
</evidence>
<evidence type="ECO:0007744" key="11">
    <source>
        <dbReference type="PDB" id="3PBG"/>
    </source>
</evidence>
<evidence type="ECO:0007744" key="12">
    <source>
        <dbReference type="PDB" id="4PBG"/>
    </source>
</evidence>
<evidence type="ECO:0007829" key="13">
    <source>
        <dbReference type="PDB" id="1PBG"/>
    </source>
</evidence>
<evidence type="ECO:0007829" key="14">
    <source>
        <dbReference type="PDB" id="2PBG"/>
    </source>
</evidence>
<evidence type="ECO:0007829" key="15">
    <source>
        <dbReference type="PDB" id="4PBG"/>
    </source>
</evidence>
<comment type="catalytic activity">
    <reaction evidence="1">
        <text>a 6-phospho-beta-D-galactoside + H2O = D-galactose 6-phosphate + an alcohol</text>
        <dbReference type="Rhea" id="RHEA:24568"/>
        <dbReference type="ChEBI" id="CHEBI:15377"/>
        <dbReference type="ChEBI" id="CHEBI:30879"/>
        <dbReference type="ChEBI" id="CHEBI:58534"/>
        <dbReference type="ChEBI" id="CHEBI:91004"/>
        <dbReference type="EC" id="3.2.1.85"/>
    </reaction>
</comment>
<comment type="pathway">
    <text evidence="1">Carbohydrate metabolism; lactose degradation; D-galactose 6-phosphate and beta-D-glucose from lactose 6-phosphate: step 1/1.</text>
</comment>
<comment type="induction">
    <text evidence="2">By lactose. The operon consists of lacABCDFEGX.</text>
</comment>
<comment type="miscellaneous">
    <text>This gene was sequenced from pMG820, a laboratory-derived deletion of the naturally occurring plasmid pLP712.</text>
</comment>
<comment type="similarity">
    <text evidence="1">Belongs to the glycosyl hydrolase 1 family.</text>
</comment>
<comment type="sequence caution" evidence="7">
    <conflict type="erroneous initiation">
        <sequence resource="EMBL-CDS" id="AAA26949"/>
    </conflict>
</comment>
<comment type="sequence caution" evidence="7">
    <conflict type="erroneous initiation">
        <sequence resource="EMBL-CDS" id="CAA42986"/>
    </conflict>
</comment>
<accession>P11546</accession>
<accession>Q79AQ5</accession>
<gene>
    <name evidence="1 4" type="primary">lacG</name>
</gene>
<sequence length="468" mass="54072">MTKTLPKDFIFGGATAAYQAEGATHTDGKGPVAWDKYLEDNYWYTAEPASDFYHKYPVDLELAEEYGVNGIRISIAWSRIFPTGYGEVNEKGVEFYHKLFAECHKRHVEPFVTLHHFDTPEALHSNGDFLNRENIEHFIDYAAFCFEEFPEVNYWTTFNEIGPIGDGQYLVGKFPPGIKYDLAKVFQSHHNMMVSHARAVKLYKDKGYKGEIGVVHALPTKYPYDPENPADVRAAELEDIIHNKFILDATYLGHYSDKTMEGVNHILAENGGELDLRDEDFQALDAAKDLNDFLGINYYMSDWMQAFDGETEIIHNGKGEKGSSKYQIKGVGRRVAPDYVPRTDWDWIIYPEGLYDQIMRVKNDYPNYKKIYITENGLGYKDEFVDNTVYDDGRIDYVKQHLEVLSDAIADGANVKGYFIWSLMDVFSWSNGYEKRYGLFYVDFDTQERYPKKSAHWYKKLAETQVIE</sequence>